<comment type="function">
    <text evidence="1">Exonuclease involved in the 3' processing of various precursor tRNAs. Initiates hydrolysis at the 3'-terminus of an RNA molecule and releases 5'-mononucleotides.</text>
</comment>
<comment type="catalytic activity">
    <reaction evidence="1">
        <text>Exonucleolytic cleavage that removes extra residues from the 3'-terminus of tRNA to produce 5'-mononucleotides.</text>
        <dbReference type="EC" id="3.1.13.5"/>
    </reaction>
</comment>
<comment type="cofactor">
    <cofactor evidence="1">
        <name>a divalent metal cation</name>
        <dbReference type="ChEBI" id="CHEBI:60240"/>
    </cofactor>
</comment>
<comment type="subcellular location">
    <subcellularLocation>
        <location evidence="1">Cytoplasm</location>
    </subcellularLocation>
</comment>
<comment type="similarity">
    <text evidence="1">Belongs to the RNase D family.</text>
</comment>
<comment type="sequence caution" evidence="2">
    <conflict type="erroneous initiation">
        <sequence resource="EMBL-CDS" id="ABI61109"/>
    </conflict>
    <text>Extended N-terminus.</text>
</comment>
<keyword id="KW-0963">Cytoplasm</keyword>
<keyword id="KW-0269">Exonuclease</keyword>
<keyword id="KW-0378">Hydrolase</keyword>
<keyword id="KW-0540">Nuclease</keyword>
<keyword id="KW-1185">Reference proteome</keyword>
<keyword id="KW-0819">tRNA processing</keyword>
<reference key="1">
    <citation type="journal article" date="2007" name="J. Bacteriol.">
        <title>Genome sequence analysis of the emerging human pathogenic acetic acid bacterium Granulibacter bethesdensis.</title>
        <authorList>
            <person name="Greenberg D.E."/>
            <person name="Porcella S.F."/>
            <person name="Zelazny A.M."/>
            <person name="Virtaneva K."/>
            <person name="Sturdevant D.E."/>
            <person name="Kupko J.J. III"/>
            <person name="Barbian K.D."/>
            <person name="Babar A."/>
            <person name="Dorward D.W."/>
            <person name="Holland S.M."/>
        </authorList>
    </citation>
    <scope>NUCLEOTIDE SEQUENCE [LARGE SCALE GENOMIC DNA]</scope>
    <source>
        <strain>ATCC BAA-1260 / CGDNIH1</strain>
    </source>
</reference>
<sequence>MSRQSRSRFPSPTLITKSEDLAALCTTLRREPYVTIDTEFMRERTYWPELCVVQLGGADCVAVIDTLAPELDLAPVGELLADPAVIKVFHACRQDIEIFLLRFGSIPQPMFDTQVAAMVAGFGDQVGYDTLVSSLTGGHIDKAHRFSDWSRRPLSQAQIDYAAADVTHLRGVYETLRDRLEKEGRLAWVSEEMAVLNDPATYRTDPVTMWERLRPRTNNRRYLGLLRAICAWREVEAQRLNIPRQRLIKDESLLEIAATSPADAESLAQARGVGRGFAEGRSGATLLAAIAEARGLPDADLPAIPRSRESGARPSPALVSLLKVLLAAKSEQHNVAPKLLASSEDLDRLATEAEPDVPALTGWRRDVFGQDALALKNGEICLGVDGKQIKLITTG</sequence>
<proteinExistence type="inferred from homology"/>
<accession>Q0BVP4</accession>
<name>RND_GRABC</name>
<dbReference type="EC" id="3.1.13.5" evidence="1"/>
<dbReference type="EMBL" id="CP000394">
    <property type="protein sequence ID" value="ABI61109.1"/>
    <property type="status" value="ALT_INIT"/>
    <property type="molecule type" value="Genomic_DNA"/>
</dbReference>
<dbReference type="RefSeq" id="WP_043452603.1">
    <property type="nucleotide sequence ID" value="NC_008343.2"/>
</dbReference>
<dbReference type="SMR" id="Q0BVP4"/>
<dbReference type="STRING" id="391165.GbCGDNIH1_0211"/>
<dbReference type="KEGG" id="gbe:GbCGDNIH1_0211"/>
<dbReference type="eggNOG" id="COG0349">
    <property type="taxonomic scope" value="Bacteria"/>
</dbReference>
<dbReference type="HOGENOM" id="CLU_042387_0_0_5"/>
<dbReference type="OrthoDB" id="9800549at2"/>
<dbReference type="Proteomes" id="UP000001963">
    <property type="component" value="Chromosome"/>
</dbReference>
<dbReference type="GO" id="GO:0005737">
    <property type="term" value="C:cytoplasm"/>
    <property type="evidence" value="ECO:0007669"/>
    <property type="project" value="UniProtKB-SubCell"/>
</dbReference>
<dbReference type="GO" id="GO:0008408">
    <property type="term" value="F:3'-5' exonuclease activity"/>
    <property type="evidence" value="ECO:0007669"/>
    <property type="project" value="InterPro"/>
</dbReference>
<dbReference type="GO" id="GO:0003676">
    <property type="term" value="F:nucleic acid binding"/>
    <property type="evidence" value="ECO:0007669"/>
    <property type="project" value="InterPro"/>
</dbReference>
<dbReference type="GO" id="GO:0000166">
    <property type="term" value="F:nucleotide binding"/>
    <property type="evidence" value="ECO:0007669"/>
    <property type="project" value="InterPro"/>
</dbReference>
<dbReference type="GO" id="GO:0033890">
    <property type="term" value="F:ribonuclease D activity"/>
    <property type="evidence" value="ECO:0007669"/>
    <property type="project" value="UniProtKB-UniRule"/>
</dbReference>
<dbReference type="GO" id="GO:0042780">
    <property type="term" value="P:tRNA 3'-end processing"/>
    <property type="evidence" value="ECO:0007669"/>
    <property type="project" value="UniProtKB-UniRule"/>
</dbReference>
<dbReference type="CDD" id="cd06142">
    <property type="entry name" value="RNaseD_exo"/>
    <property type="match status" value="1"/>
</dbReference>
<dbReference type="Gene3D" id="1.10.150.80">
    <property type="entry name" value="HRDC domain"/>
    <property type="match status" value="1"/>
</dbReference>
<dbReference type="Gene3D" id="3.30.420.10">
    <property type="entry name" value="Ribonuclease H-like superfamily/Ribonuclease H"/>
    <property type="match status" value="1"/>
</dbReference>
<dbReference type="HAMAP" id="MF_01899">
    <property type="entry name" value="RNase_D"/>
    <property type="match status" value="1"/>
</dbReference>
<dbReference type="InterPro" id="IPR002562">
    <property type="entry name" value="3'-5'_exonuclease_dom"/>
</dbReference>
<dbReference type="InterPro" id="IPR010997">
    <property type="entry name" value="HRDC-like_sf"/>
</dbReference>
<dbReference type="InterPro" id="IPR002121">
    <property type="entry name" value="HRDC_dom"/>
</dbReference>
<dbReference type="InterPro" id="IPR044876">
    <property type="entry name" value="HRDC_dom_sf"/>
</dbReference>
<dbReference type="InterPro" id="IPR006292">
    <property type="entry name" value="RNase_D"/>
</dbReference>
<dbReference type="InterPro" id="IPR051086">
    <property type="entry name" value="RNase_D-like"/>
</dbReference>
<dbReference type="InterPro" id="IPR012337">
    <property type="entry name" value="RNaseH-like_sf"/>
</dbReference>
<dbReference type="InterPro" id="IPR036397">
    <property type="entry name" value="RNaseH_sf"/>
</dbReference>
<dbReference type="NCBIfam" id="TIGR01388">
    <property type="entry name" value="rnd"/>
    <property type="match status" value="1"/>
</dbReference>
<dbReference type="PANTHER" id="PTHR47649">
    <property type="entry name" value="RIBONUCLEASE D"/>
    <property type="match status" value="1"/>
</dbReference>
<dbReference type="PANTHER" id="PTHR47649:SF1">
    <property type="entry name" value="RIBONUCLEASE D"/>
    <property type="match status" value="1"/>
</dbReference>
<dbReference type="Pfam" id="PF01612">
    <property type="entry name" value="DNA_pol_A_exo1"/>
    <property type="match status" value="1"/>
</dbReference>
<dbReference type="Pfam" id="PF00570">
    <property type="entry name" value="HRDC"/>
    <property type="match status" value="1"/>
</dbReference>
<dbReference type="SMART" id="SM00474">
    <property type="entry name" value="35EXOc"/>
    <property type="match status" value="1"/>
</dbReference>
<dbReference type="SMART" id="SM00341">
    <property type="entry name" value="HRDC"/>
    <property type="match status" value="1"/>
</dbReference>
<dbReference type="SUPFAM" id="SSF47819">
    <property type="entry name" value="HRDC-like"/>
    <property type="match status" value="2"/>
</dbReference>
<dbReference type="SUPFAM" id="SSF53098">
    <property type="entry name" value="Ribonuclease H-like"/>
    <property type="match status" value="1"/>
</dbReference>
<dbReference type="PROSITE" id="PS50967">
    <property type="entry name" value="HRDC"/>
    <property type="match status" value="1"/>
</dbReference>
<organism>
    <name type="scientific">Granulibacter bethesdensis (strain ATCC BAA-1260 / CGDNIH1)</name>
    <dbReference type="NCBI Taxonomy" id="391165"/>
    <lineage>
        <taxon>Bacteria</taxon>
        <taxon>Pseudomonadati</taxon>
        <taxon>Pseudomonadota</taxon>
        <taxon>Alphaproteobacteria</taxon>
        <taxon>Acetobacterales</taxon>
        <taxon>Acetobacteraceae</taxon>
        <taxon>Granulibacter</taxon>
    </lineage>
</organism>
<protein>
    <recommendedName>
        <fullName evidence="1">Ribonuclease D</fullName>
        <shortName evidence="1">RNase D</shortName>
        <ecNumber evidence="1">3.1.13.5</ecNumber>
    </recommendedName>
</protein>
<feature type="chain" id="PRO_0000411064" description="Ribonuclease D">
    <location>
        <begin position="1"/>
        <end position="395"/>
    </location>
</feature>
<feature type="domain" description="3'-5' exonuclease" evidence="1">
    <location>
        <begin position="14"/>
        <end position="181"/>
    </location>
</feature>
<feature type="domain" description="HRDC" evidence="1">
    <location>
        <begin position="219"/>
        <end position="300"/>
    </location>
</feature>
<evidence type="ECO:0000255" key="1">
    <source>
        <dbReference type="HAMAP-Rule" id="MF_01899"/>
    </source>
</evidence>
<evidence type="ECO:0000305" key="2"/>
<gene>
    <name evidence="1" type="primary">rnd</name>
    <name type="ordered locus">GbCGDNIH1_0211</name>
</gene>